<proteinExistence type="inferred from homology"/>
<reference key="1">
    <citation type="submission" date="2002-02" db="EMBL/GenBank/DDBJ databases">
        <title>psbB gene cluster in Charophyceae.</title>
        <authorList>
            <person name="Lee J."/>
            <person name="Manhart J.R."/>
        </authorList>
    </citation>
    <scope>NUCLEOTIDE SEQUENCE [GENOMIC DNA]</scope>
</reference>
<dbReference type="EMBL" id="AF482498">
    <property type="protein sequence ID" value="AAQ05914.1"/>
    <property type="molecule type" value="Genomic_DNA"/>
</dbReference>
<dbReference type="RefSeq" id="YP_009258377.1">
    <property type="nucleotide sequence ID" value="NC_030355.1"/>
</dbReference>
<dbReference type="SMR" id="Q71KP3"/>
<dbReference type="GeneID" id="27984705"/>
<dbReference type="GO" id="GO:0009535">
    <property type="term" value="C:chloroplast thylakoid membrane"/>
    <property type="evidence" value="ECO:0007669"/>
    <property type="project" value="UniProtKB-SubCell"/>
</dbReference>
<dbReference type="GO" id="GO:0005739">
    <property type="term" value="C:mitochondrion"/>
    <property type="evidence" value="ECO:0007669"/>
    <property type="project" value="GOC"/>
</dbReference>
<dbReference type="GO" id="GO:0045158">
    <property type="term" value="F:electron transporter, transferring electrons within cytochrome b6/f complex of photosystem II activity"/>
    <property type="evidence" value="ECO:0007669"/>
    <property type="project" value="UniProtKB-UniRule"/>
</dbReference>
<dbReference type="GO" id="GO:0045156">
    <property type="term" value="F:electron transporter, transferring electrons within the cyclic electron transport pathway of photosynthesis activity"/>
    <property type="evidence" value="ECO:0007669"/>
    <property type="project" value="InterPro"/>
</dbReference>
<dbReference type="GO" id="GO:0008121">
    <property type="term" value="F:ubiquinol-cytochrome-c reductase activity"/>
    <property type="evidence" value="ECO:0007669"/>
    <property type="project" value="TreeGrafter"/>
</dbReference>
<dbReference type="GO" id="GO:0006122">
    <property type="term" value="P:mitochondrial electron transport, ubiquinol to cytochrome c"/>
    <property type="evidence" value="ECO:0007669"/>
    <property type="project" value="TreeGrafter"/>
</dbReference>
<dbReference type="GO" id="GO:0009767">
    <property type="term" value="P:photosynthetic electron transport chain"/>
    <property type="evidence" value="ECO:0007669"/>
    <property type="project" value="InterPro"/>
</dbReference>
<dbReference type="CDD" id="cd00290">
    <property type="entry name" value="cytochrome_b_C"/>
    <property type="match status" value="1"/>
</dbReference>
<dbReference type="FunFam" id="1.10.287.980:FF:000001">
    <property type="entry name" value="Cytochrome b6-f complex subunit 4"/>
    <property type="match status" value="1"/>
</dbReference>
<dbReference type="FunFam" id="1.20.5.510:FF:000002">
    <property type="entry name" value="Cytochrome b6-f complex subunit 4"/>
    <property type="match status" value="1"/>
</dbReference>
<dbReference type="Gene3D" id="1.10.287.980">
    <property type="entry name" value="plastocyanin oxidoreductase"/>
    <property type="match status" value="1"/>
</dbReference>
<dbReference type="Gene3D" id="1.20.5.510">
    <property type="entry name" value="Single helix bin"/>
    <property type="match status" value="1"/>
</dbReference>
<dbReference type="HAMAP" id="MF_01344">
    <property type="entry name" value="Cytb6_f_subIV"/>
    <property type="match status" value="1"/>
</dbReference>
<dbReference type="InterPro" id="IPR005798">
    <property type="entry name" value="Cyt_b/b6_C"/>
</dbReference>
<dbReference type="InterPro" id="IPR036150">
    <property type="entry name" value="Cyt_b/b6_C_sf"/>
</dbReference>
<dbReference type="InterPro" id="IPR005870">
    <property type="entry name" value="Cyt_b6/f_cplx_suIV"/>
</dbReference>
<dbReference type="InterPro" id="IPR048260">
    <property type="entry name" value="Cytochrome_b_C_euk/bac"/>
</dbReference>
<dbReference type="NCBIfam" id="TIGR01156">
    <property type="entry name" value="cytb6_f_IV"/>
    <property type="match status" value="1"/>
</dbReference>
<dbReference type="PANTHER" id="PTHR19271">
    <property type="entry name" value="CYTOCHROME B"/>
    <property type="match status" value="1"/>
</dbReference>
<dbReference type="PANTHER" id="PTHR19271:SF41">
    <property type="entry name" value="CYTOCHROME B_B6 C-TERMINAL REGION PROFILE DOMAIN-CONTAINING PROTEIN"/>
    <property type="match status" value="1"/>
</dbReference>
<dbReference type="Pfam" id="PF00032">
    <property type="entry name" value="Cytochrom_B_C"/>
    <property type="match status" value="1"/>
</dbReference>
<dbReference type="PIRSF" id="PIRSF000033">
    <property type="entry name" value="B6f_17K"/>
    <property type="match status" value="1"/>
</dbReference>
<dbReference type="SUPFAM" id="SSF81648">
    <property type="entry name" value="a domain/subunit of cytochrome bc1 complex (Ubiquinol-cytochrome c reductase)"/>
    <property type="match status" value="1"/>
</dbReference>
<dbReference type="PROSITE" id="PS51003">
    <property type="entry name" value="CYTB_CTER"/>
    <property type="match status" value="1"/>
</dbReference>
<protein>
    <recommendedName>
        <fullName evidence="2">Cytochrome b6-f complex subunit 4</fullName>
    </recommendedName>
    <alternativeName>
        <fullName evidence="2">17 kDa polypeptide</fullName>
    </alternativeName>
</protein>
<accession>Q71KP3</accession>
<sequence length="160" mass="17467">MGVTKKPDLTDPVLRAKLAKGMGHNYYGEPAWPNDLLYIFPVVIFGTIACNVGLAVLEPSMIGEPANPFATPLEILPEWYFFPVFQILRTVPNKLLGVLLMAAVPAGLLTVPFLENVNKFQNPFRRPVATTVFLFGTVVALWLGIGAALPIDKSLTLGLF</sequence>
<geneLocation type="chloroplast"/>
<organism>
    <name type="scientific">Spirogyra maxima</name>
    <name type="common">Green alga</name>
    <dbReference type="NCBI Taxonomy" id="3180"/>
    <lineage>
        <taxon>Eukaryota</taxon>
        <taxon>Viridiplantae</taxon>
        <taxon>Streptophyta</taxon>
        <taxon>Zygnematophyceae</taxon>
        <taxon>Zygnematophycidae</taxon>
        <taxon>Zygnematales</taxon>
        <taxon>Zygnemataceae</taxon>
        <taxon>Spirogyra</taxon>
    </lineage>
</organism>
<keyword id="KW-0150">Chloroplast</keyword>
<keyword id="KW-0249">Electron transport</keyword>
<keyword id="KW-0472">Membrane</keyword>
<keyword id="KW-0602">Photosynthesis</keyword>
<keyword id="KW-0934">Plastid</keyword>
<keyword id="KW-0793">Thylakoid</keyword>
<keyword id="KW-0812">Transmembrane</keyword>
<keyword id="KW-1133">Transmembrane helix</keyword>
<keyword id="KW-0813">Transport</keyword>
<gene>
    <name evidence="2" type="primary">petD</name>
</gene>
<comment type="function">
    <text evidence="2">Component of the cytochrome b6-f complex, which mediates electron transfer between photosystem II (PSII) and photosystem I (PSI), cyclic electron flow around PSI, and state transitions.</text>
</comment>
<comment type="subunit">
    <text evidence="1">The 4 large subunits of the cytochrome b6-f complex are cytochrome b6, subunit IV (17 kDa polypeptide, petD), cytochrome f and the Rieske protein, while the 4 small subunits are petG, petL, petM and petN. The complex functions as a dimer (By similarity).</text>
</comment>
<comment type="subcellular location">
    <subcellularLocation>
        <location evidence="2">Plastid</location>
        <location evidence="2">Chloroplast thylakoid membrane</location>
        <topology evidence="2">Multi-pass membrane protein</topology>
    </subcellularLocation>
</comment>
<comment type="similarity">
    <text evidence="2">Belongs to the cytochrome b family. PetD subfamily.</text>
</comment>
<name>PETD_SPIMX</name>
<evidence type="ECO:0000250" key="1"/>
<evidence type="ECO:0000255" key="2">
    <source>
        <dbReference type="HAMAP-Rule" id="MF_01344"/>
    </source>
</evidence>
<feature type="chain" id="PRO_0000061892" description="Cytochrome b6-f complex subunit 4">
    <location>
        <begin position="1"/>
        <end position="160"/>
    </location>
</feature>
<feature type="transmembrane region" description="Helical" evidence="2">
    <location>
        <begin position="36"/>
        <end position="56"/>
    </location>
</feature>
<feature type="transmembrane region" description="Helical" evidence="2">
    <location>
        <begin position="95"/>
        <end position="115"/>
    </location>
</feature>
<feature type="transmembrane region" description="Helical" evidence="2">
    <location>
        <begin position="131"/>
        <end position="151"/>
    </location>
</feature>